<reference key="1">
    <citation type="journal article" date="1999" name="Science">
        <title>Genome sequence of the radioresistant bacterium Deinococcus radiodurans R1.</title>
        <authorList>
            <person name="White O."/>
            <person name="Eisen J.A."/>
            <person name="Heidelberg J.F."/>
            <person name="Hickey E.K."/>
            <person name="Peterson J.D."/>
            <person name="Dodson R.J."/>
            <person name="Haft D.H."/>
            <person name="Gwinn M.L."/>
            <person name="Nelson W.C."/>
            <person name="Richardson D.L."/>
            <person name="Moffat K.S."/>
            <person name="Qin H."/>
            <person name="Jiang L."/>
            <person name="Pamphile W."/>
            <person name="Crosby M."/>
            <person name="Shen M."/>
            <person name="Vamathevan J.J."/>
            <person name="Lam P."/>
            <person name="McDonald L.A."/>
            <person name="Utterback T.R."/>
            <person name="Zalewski C."/>
            <person name="Makarova K.S."/>
            <person name="Aravind L."/>
            <person name="Daly M.J."/>
            <person name="Minton K.W."/>
            <person name="Fleischmann R.D."/>
            <person name="Ketchum K.A."/>
            <person name="Nelson K.E."/>
            <person name="Salzberg S.L."/>
            <person name="Smith H.O."/>
            <person name="Venter J.C."/>
            <person name="Fraser C.M."/>
        </authorList>
    </citation>
    <scope>NUCLEOTIDE SEQUENCE [LARGE SCALE GENOMIC DNA]</scope>
    <source>
        <strain>ATCC 13939 / DSM 20539 / JCM 16871 / CCUG 27074 / LMG 4051 / NBRC 15346 / NCIMB 9279 / VKM B-1422 / R1</strain>
    </source>
</reference>
<dbReference type="EC" id="4.2.1.2" evidence="1"/>
<dbReference type="EMBL" id="AE000513">
    <property type="protein sequence ID" value="AAF12164.1"/>
    <property type="molecule type" value="Genomic_DNA"/>
</dbReference>
<dbReference type="PIR" id="B75250">
    <property type="entry name" value="B75250"/>
</dbReference>
<dbReference type="RefSeq" id="NP_296346.1">
    <property type="nucleotide sequence ID" value="NC_001263.1"/>
</dbReference>
<dbReference type="RefSeq" id="WP_010889251.1">
    <property type="nucleotide sequence ID" value="NC_001263.1"/>
</dbReference>
<dbReference type="SMR" id="Q9RR70"/>
<dbReference type="FunCoup" id="Q9RR70">
    <property type="interactions" value="363"/>
</dbReference>
<dbReference type="STRING" id="243230.DR_2627"/>
<dbReference type="PaxDb" id="243230-DR_2627"/>
<dbReference type="EnsemblBacteria" id="AAF12164">
    <property type="protein sequence ID" value="AAF12164"/>
    <property type="gene ID" value="DR_2627"/>
</dbReference>
<dbReference type="GeneID" id="69518881"/>
<dbReference type="KEGG" id="dra:DR_2627"/>
<dbReference type="PATRIC" id="fig|243230.17.peg.2875"/>
<dbReference type="eggNOG" id="COG0114">
    <property type="taxonomic scope" value="Bacteria"/>
</dbReference>
<dbReference type="HOGENOM" id="CLU_021594_4_1_0"/>
<dbReference type="InParanoid" id="Q9RR70"/>
<dbReference type="OrthoDB" id="9802809at2"/>
<dbReference type="UniPathway" id="UPA00223">
    <property type="reaction ID" value="UER01007"/>
</dbReference>
<dbReference type="Proteomes" id="UP000002524">
    <property type="component" value="Chromosome 1"/>
</dbReference>
<dbReference type="GO" id="GO:0005737">
    <property type="term" value="C:cytoplasm"/>
    <property type="evidence" value="ECO:0007669"/>
    <property type="project" value="UniProtKB-SubCell"/>
</dbReference>
<dbReference type="GO" id="GO:0004333">
    <property type="term" value="F:fumarate hydratase activity"/>
    <property type="evidence" value="ECO:0000318"/>
    <property type="project" value="GO_Central"/>
</dbReference>
<dbReference type="GO" id="GO:0006106">
    <property type="term" value="P:fumarate metabolic process"/>
    <property type="evidence" value="ECO:0000318"/>
    <property type="project" value="GO_Central"/>
</dbReference>
<dbReference type="GO" id="GO:0006108">
    <property type="term" value="P:malate metabolic process"/>
    <property type="evidence" value="ECO:0000318"/>
    <property type="project" value="GO_Central"/>
</dbReference>
<dbReference type="GO" id="GO:0006099">
    <property type="term" value="P:tricarboxylic acid cycle"/>
    <property type="evidence" value="ECO:0000318"/>
    <property type="project" value="GO_Central"/>
</dbReference>
<dbReference type="CDD" id="cd01362">
    <property type="entry name" value="Fumarase_classII"/>
    <property type="match status" value="1"/>
</dbReference>
<dbReference type="FunFam" id="1.10.40.30:FF:000002">
    <property type="entry name" value="Fumarate hydratase class II"/>
    <property type="match status" value="1"/>
</dbReference>
<dbReference type="FunFam" id="1.10.275.10:FF:000001">
    <property type="entry name" value="Fumarate hydratase, mitochondrial"/>
    <property type="match status" value="1"/>
</dbReference>
<dbReference type="FunFam" id="1.20.200.10:FF:000001">
    <property type="entry name" value="Fumarate hydratase, mitochondrial"/>
    <property type="match status" value="1"/>
</dbReference>
<dbReference type="Gene3D" id="1.10.40.30">
    <property type="entry name" value="Fumarase/aspartase (C-terminal domain)"/>
    <property type="match status" value="1"/>
</dbReference>
<dbReference type="Gene3D" id="1.20.200.10">
    <property type="entry name" value="Fumarase/aspartase (Central domain)"/>
    <property type="match status" value="1"/>
</dbReference>
<dbReference type="Gene3D" id="1.10.275.10">
    <property type="entry name" value="Fumarase/aspartase (N-terminal domain)"/>
    <property type="match status" value="1"/>
</dbReference>
<dbReference type="HAMAP" id="MF_00743">
    <property type="entry name" value="FumaraseC"/>
    <property type="match status" value="1"/>
</dbReference>
<dbReference type="InterPro" id="IPR005677">
    <property type="entry name" value="Fum_hydII"/>
</dbReference>
<dbReference type="InterPro" id="IPR024083">
    <property type="entry name" value="Fumarase/histidase_N"/>
</dbReference>
<dbReference type="InterPro" id="IPR018951">
    <property type="entry name" value="Fumarase_C_C"/>
</dbReference>
<dbReference type="InterPro" id="IPR020557">
    <property type="entry name" value="Fumarate_lyase_CS"/>
</dbReference>
<dbReference type="InterPro" id="IPR000362">
    <property type="entry name" value="Fumarate_lyase_fam"/>
</dbReference>
<dbReference type="InterPro" id="IPR022761">
    <property type="entry name" value="Fumarate_lyase_N"/>
</dbReference>
<dbReference type="InterPro" id="IPR008948">
    <property type="entry name" value="L-Aspartase-like"/>
</dbReference>
<dbReference type="NCBIfam" id="TIGR00979">
    <property type="entry name" value="fumC_II"/>
    <property type="match status" value="1"/>
</dbReference>
<dbReference type="NCBIfam" id="NF008909">
    <property type="entry name" value="PRK12273.1"/>
    <property type="match status" value="1"/>
</dbReference>
<dbReference type="PANTHER" id="PTHR11444">
    <property type="entry name" value="ASPARTATEAMMONIA/ARGININOSUCCINATE/ADENYLOSUCCINATE LYASE"/>
    <property type="match status" value="1"/>
</dbReference>
<dbReference type="PANTHER" id="PTHR11444:SF1">
    <property type="entry name" value="FUMARATE HYDRATASE, MITOCHONDRIAL"/>
    <property type="match status" value="1"/>
</dbReference>
<dbReference type="Pfam" id="PF10415">
    <property type="entry name" value="FumaraseC_C"/>
    <property type="match status" value="1"/>
</dbReference>
<dbReference type="Pfam" id="PF00206">
    <property type="entry name" value="Lyase_1"/>
    <property type="match status" value="1"/>
</dbReference>
<dbReference type="PRINTS" id="PR00145">
    <property type="entry name" value="ARGSUCLYASE"/>
</dbReference>
<dbReference type="PRINTS" id="PR00149">
    <property type="entry name" value="FUMRATELYASE"/>
</dbReference>
<dbReference type="SUPFAM" id="SSF48557">
    <property type="entry name" value="L-aspartase-like"/>
    <property type="match status" value="1"/>
</dbReference>
<dbReference type="PROSITE" id="PS00163">
    <property type="entry name" value="FUMARATE_LYASES"/>
    <property type="match status" value="1"/>
</dbReference>
<protein>
    <recommendedName>
        <fullName evidence="1">Fumarate hydratase class II</fullName>
        <shortName evidence="1">Fumarase C</shortName>
        <ecNumber evidence="1">4.2.1.2</ecNumber>
    </recommendedName>
    <alternativeName>
        <fullName evidence="1">Aerobic fumarase</fullName>
    </alternativeName>
    <alternativeName>
        <fullName evidence="1">Iron-independent fumarase</fullName>
    </alternativeName>
</protein>
<proteinExistence type="inferred from homology"/>
<gene>
    <name evidence="1" type="primary">fumC</name>
    <name type="ordered locus">DR_2627</name>
</gene>
<accession>Q9RR70</accession>
<evidence type="ECO:0000255" key="1">
    <source>
        <dbReference type="HAMAP-Rule" id="MF_00743"/>
    </source>
</evidence>
<organism>
    <name type="scientific">Deinococcus radiodurans (strain ATCC 13939 / DSM 20539 / JCM 16871 / CCUG 27074 / LMG 4051 / NBRC 15346 / NCIMB 9279 / VKM B-1422 / R1)</name>
    <dbReference type="NCBI Taxonomy" id="243230"/>
    <lineage>
        <taxon>Bacteria</taxon>
        <taxon>Thermotogati</taxon>
        <taxon>Deinococcota</taxon>
        <taxon>Deinococci</taxon>
        <taxon>Deinococcales</taxon>
        <taxon>Deinococcaceae</taxon>
        <taxon>Deinococcus</taxon>
    </lineage>
</organism>
<name>FUMC_DEIRA</name>
<comment type="function">
    <text evidence="1">Involved in the TCA cycle. Catalyzes the stereospecific interconversion of fumarate to L-malate.</text>
</comment>
<comment type="catalytic activity">
    <reaction evidence="1">
        <text>(S)-malate = fumarate + H2O</text>
        <dbReference type="Rhea" id="RHEA:12460"/>
        <dbReference type="ChEBI" id="CHEBI:15377"/>
        <dbReference type="ChEBI" id="CHEBI:15589"/>
        <dbReference type="ChEBI" id="CHEBI:29806"/>
        <dbReference type="EC" id="4.2.1.2"/>
    </reaction>
</comment>
<comment type="pathway">
    <text evidence="1">Carbohydrate metabolism; tricarboxylic acid cycle; (S)-malate from fumarate: step 1/1.</text>
</comment>
<comment type="subunit">
    <text evidence="1">Homotetramer.</text>
</comment>
<comment type="subcellular location">
    <subcellularLocation>
        <location evidence="1">Cytoplasm</location>
    </subcellularLocation>
</comment>
<comment type="miscellaneous">
    <text evidence="1">There are 2 substrate-binding sites: the catalytic A site, and the non-catalytic B site that may play a role in the transfer of substrate or product between the active site and the solvent. Alternatively, the B site may bind allosteric effectors.</text>
</comment>
<comment type="similarity">
    <text evidence="1">Belongs to the class-II fumarase/aspartase family. Fumarase subfamily.</text>
</comment>
<keyword id="KW-0963">Cytoplasm</keyword>
<keyword id="KW-0456">Lyase</keyword>
<keyword id="KW-1185">Reference proteome</keyword>
<keyword id="KW-0816">Tricarboxylic acid cycle</keyword>
<sequence length="464" mass="49876">MTKTRQETDTMGKMDVDASRYWGAQTERSIHNFPIGRDTFVWGRPVIRALGILKKGAAQANAELGELPADVADLIVKAADEVIAGKLDEHFPLVVFQTGSGTQSNMNANEVISNRAIELAGGEMGSKKPVHPNDHVNRGQSSNDTFPTAMHIAVVLELNERLYGAVGKLRDTLHAKAEQYKDLVKVGRTHLQDATPITLGQEIGGWVAQLDYALSEVKHAGEGLLDLAIGGTAVGTGLNAHPKFGDLAAKKYEEETGYHFRSAENKFAALSAHDALVQTSAALRTLAGALMKMANDVRWLASGPRNGIGEITIPENEPGSSIMPGKVNPTQSEAMTMVATRVFGNDATVAFAGSQGNFQLNVFKPVMVHAVLESIRLISDACLAFNDHCAVGIQPNEAKIKENLDKNLMQVTALNRHIGYDKAAAIAKKAHKEGTSLKDAALALGYVTEDEFAQWVVPLGMTHN</sequence>
<feature type="chain" id="PRO_0000161274" description="Fumarate hydratase class II">
    <location>
        <begin position="1"/>
        <end position="464"/>
    </location>
</feature>
<feature type="active site" description="Proton donor/acceptor" evidence="1">
    <location>
        <position position="190"/>
    </location>
</feature>
<feature type="active site" evidence="1">
    <location>
        <position position="320"/>
    </location>
</feature>
<feature type="binding site" evidence="1">
    <location>
        <begin position="100"/>
        <end position="102"/>
    </location>
    <ligand>
        <name>substrate</name>
    </ligand>
</feature>
<feature type="binding site" description="in site B" evidence="1">
    <location>
        <begin position="131"/>
        <end position="134"/>
    </location>
    <ligand>
        <name>substrate</name>
    </ligand>
</feature>
<feature type="binding site" evidence="1">
    <location>
        <begin position="141"/>
        <end position="143"/>
    </location>
    <ligand>
        <name>substrate</name>
    </ligand>
</feature>
<feature type="binding site" evidence="1">
    <location>
        <position position="189"/>
    </location>
    <ligand>
        <name>substrate</name>
    </ligand>
</feature>
<feature type="binding site" evidence="1">
    <location>
        <position position="321"/>
    </location>
    <ligand>
        <name>substrate</name>
    </ligand>
</feature>
<feature type="binding site" evidence="1">
    <location>
        <begin position="326"/>
        <end position="328"/>
    </location>
    <ligand>
        <name>substrate</name>
    </ligand>
</feature>
<feature type="site" description="Important for catalytic activity" evidence="1">
    <location>
        <position position="333"/>
    </location>
</feature>